<sequence>MLPSLQSLTKKVLAGQCVSVDHYHILKCCGLWWHNGPIMLHIRRNRIFIRSTCFSQGIELNIGLMKAVKENNHDLIKLFTEWGADINYGMICALTENTRDLCKELGAKEYLEREYILKIFFDTTRDKTSNNIIFCHEVFSNNPNLRIIDNLDLRGEIMWELRGLMEITFMLDHDDSFSTVLTKYWYAIAVDYDLKDAIRYFYQKYPRLHRWRLMCALFYNNVFDLHELYEIERVRMDIDEMMHIACVQDYSYSAIYYCFIMGANINQAMLVSIQNYNLGNLFFCIDLGANAFEEGKALAEQKGNYLIANALSLKHYNPVISLLSVVTDPEKINRMLKNYHSINMGIFLDYEQR</sequence>
<evidence type="ECO:0000269" key="1">
    <source>
    </source>
</evidence>
<evidence type="ECO:0000305" key="2"/>
<protein>
    <recommendedName>
        <fullName>Protein MGF 360-11L</fullName>
    </recommendedName>
</protein>
<organismHost>
    <name type="scientific">Ornithodoros</name>
    <name type="common">relapsing fever ticks</name>
    <dbReference type="NCBI Taxonomy" id="6937"/>
</organismHost>
<organismHost>
    <name type="scientific">Phacochoerus aethiopicus</name>
    <name type="common">Warthog</name>
    <dbReference type="NCBI Taxonomy" id="85517"/>
</organismHost>
<organismHost>
    <name type="scientific">Phacochoerus africanus</name>
    <name type="common">Warthog</name>
    <dbReference type="NCBI Taxonomy" id="41426"/>
</organismHost>
<organismHost>
    <name type="scientific">Potamochoerus larvatus</name>
    <name type="common">Bushpig</name>
    <dbReference type="NCBI Taxonomy" id="273792"/>
</organismHost>
<organismHost>
    <name type="scientific">Sus scrofa</name>
    <name type="common">Pig</name>
    <dbReference type="NCBI Taxonomy" id="9823"/>
</organismHost>
<comment type="function">
    <text evidence="1">Plays a role in virus cell tropism, and may be required for efficient virus replication in macrophages. In addition, inhibits the phosphorylation of host TBK1 and IRF7 and thereby negatively regulates the host cGAS signaling pathway and antagonizes IFN-mediated antiviral activity (PubMed:35073979).</text>
</comment>
<comment type="subunit">
    <text evidence="1">Interacts with host TBK1 ad IRF7.</text>
</comment>
<comment type="similarity">
    <text evidence="2">Belongs to the asfivirus MGF 360 family.</text>
</comment>
<organism>
    <name type="scientific">African swine fever virus (isolate Warthog/Namibia/Wart80/1980)</name>
    <name type="common">ASFV</name>
    <dbReference type="NCBI Taxonomy" id="561444"/>
    <lineage>
        <taxon>Viruses</taxon>
        <taxon>Varidnaviria</taxon>
        <taxon>Bamfordvirae</taxon>
        <taxon>Nucleocytoviricota</taxon>
        <taxon>Pokkesviricetes</taxon>
        <taxon>Asfuvirales</taxon>
        <taxon>Asfarviridae</taxon>
        <taxon>Asfivirus</taxon>
        <taxon>African swine fever virus</taxon>
    </lineage>
</organism>
<reference key="1">
    <citation type="submission" date="2003-03" db="EMBL/GenBank/DDBJ databases">
        <title>African swine fever virus genomes.</title>
        <authorList>
            <person name="Kutish G.F."/>
            <person name="Rock D.L."/>
        </authorList>
    </citation>
    <scope>NUCLEOTIDE SEQUENCE [LARGE SCALE GENOMIC DNA]</scope>
</reference>
<reference key="2">
    <citation type="journal article" date="2022" name="Vet. Res.">
        <title>African swine fever virus MGF360-11L negatively regulates cGAS-STING-mediated inhibition of type I interferon production.</title>
        <authorList>
            <person name="Yang K."/>
            <person name="Xue Y."/>
            <person name="Niu H."/>
            <person name="Shi C."/>
            <person name="Cheng M."/>
            <person name="Wang J."/>
            <person name="Zou B."/>
            <person name="Wang J."/>
            <person name="Niu T."/>
            <person name="Bao M."/>
            <person name="Yang W."/>
            <person name="Zhao D."/>
            <person name="Jiang Y."/>
            <person name="Yang G."/>
            <person name="Zeng Y."/>
            <person name="Cao X."/>
            <person name="Wang C."/>
        </authorList>
    </citation>
    <scope>FUNCTION</scope>
    <scope>INTERACTION WITH HOST IRF7 AND TBK1</scope>
</reference>
<gene>
    <name type="ordered locus">War-031</name>
</gene>
<proteinExistence type="evidence at protein level"/>
<name>36011_ASFWA</name>
<accession>P0C9P6</accession>
<feature type="chain" id="PRO_0000373276" description="Protein MGF 360-11L">
    <location>
        <begin position="1"/>
        <end position="353"/>
    </location>
</feature>
<dbReference type="EMBL" id="AY261366">
    <property type="status" value="NOT_ANNOTATED_CDS"/>
    <property type="molecule type" value="Genomic_DNA"/>
</dbReference>
<dbReference type="SMR" id="P0C9P6"/>
<dbReference type="Proteomes" id="UP000000858">
    <property type="component" value="Segment"/>
</dbReference>
<dbReference type="GO" id="GO:0042330">
    <property type="term" value="P:taxis"/>
    <property type="evidence" value="ECO:0007669"/>
    <property type="project" value="InterPro"/>
</dbReference>
<dbReference type="InterPro" id="IPR002595">
    <property type="entry name" value="ASFV_MGF360"/>
</dbReference>
<dbReference type="Pfam" id="PF01671">
    <property type="entry name" value="ASFV_360"/>
    <property type="match status" value="1"/>
</dbReference>